<evidence type="ECO:0000250" key="1">
    <source>
        <dbReference type="UniProtKB" id="P01215"/>
    </source>
</evidence>
<evidence type="ECO:0000305" key="2"/>
<sequence>MDCYRRYAAVILVMLSMVLHILHSLPDGDLIIQGCPECKLKENKYFSKLGAPIYQCMGCCFSRAYPTPARSKKTMLVPKNITSEATCCVAKSFTKATVMGNARVENHTDCHCSTCYYHKS</sequence>
<name>GLHA_RAT</name>
<proteinExistence type="evidence at transcript level"/>
<accession>P11962</accession>
<accession>P70516</accession>
<protein>
    <recommendedName>
        <fullName>Glycoprotein hormones alpha chain</fullName>
    </recommendedName>
    <alternativeName>
        <fullName>Anterior pituitary glycoprotein hormones common subunit alpha</fullName>
    </alternativeName>
    <alternativeName>
        <fullName>Follicle-stimulating hormone alpha chain</fullName>
        <shortName>FSH-alpha</shortName>
    </alternativeName>
    <alternativeName>
        <fullName>Follitropin alpha chain</fullName>
    </alternativeName>
    <alternativeName>
        <fullName>Luteinizing hormone alpha chain</fullName>
        <shortName>LSH-alpha</shortName>
    </alternativeName>
    <alternativeName>
        <fullName>Lutropin alpha chain</fullName>
    </alternativeName>
    <alternativeName>
        <fullName>Thyroid-stimulating hormone alpha chain</fullName>
        <shortName>TSH-alpha</shortName>
    </alternativeName>
    <alternativeName>
        <fullName>Thyrotropin alpha chain</fullName>
    </alternativeName>
</protein>
<dbReference type="EMBL" id="J00757">
    <property type="protein sequence ID" value="AAA97425.1"/>
    <property type="molecule type" value="mRNA"/>
</dbReference>
<dbReference type="EMBL" id="M25543">
    <property type="protein sequence ID" value="AAB04669.1"/>
    <property type="molecule type" value="Genomic_DNA"/>
</dbReference>
<dbReference type="EMBL" id="M22829">
    <property type="protein sequence ID" value="AAB04669.1"/>
    <property type="status" value="JOINED"/>
    <property type="molecule type" value="Genomic_DNA"/>
</dbReference>
<dbReference type="EMBL" id="M25544">
    <property type="protein sequence ID" value="AAB04668.1"/>
    <property type="molecule type" value="Genomic_DNA"/>
</dbReference>
<dbReference type="EMBL" id="D00575">
    <property type="protein sequence ID" value="BAA00453.1"/>
    <property type="molecule type" value="mRNA"/>
</dbReference>
<dbReference type="PIR" id="JT0408">
    <property type="entry name" value="TTRTA"/>
</dbReference>
<dbReference type="RefSeq" id="NP_446370.3">
    <property type="nucleotide sequence ID" value="NM_053918.3"/>
</dbReference>
<dbReference type="RefSeq" id="XP_017448612.1">
    <property type="nucleotide sequence ID" value="XM_017593123.1"/>
</dbReference>
<dbReference type="RefSeq" id="XP_063143142.1">
    <property type="nucleotide sequence ID" value="XM_063287072.1"/>
</dbReference>
<dbReference type="RefSeq" id="XP_063143143.1">
    <property type="nucleotide sequence ID" value="XM_063287073.1"/>
</dbReference>
<dbReference type="SMR" id="P11962"/>
<dbReference type="FunCoup" id="P11962">
    <property type="interactions" value="246"/>
</dbReference>
<dbReference type="IntAct" id="P11962">
    <property type="interactions" value="1"/>
</dbReference>
<dbReference type="STRING" id="10116.ENSRNOP00000012385"/>
<dbReference type="GlyCosmos" id="P11962">
    <property type="glycosylation" value="2 sites, No reported glycans"/>
</dbReference>
<dbReference type="GlyGen" id="P11962">
    <property type="glycosylation" value="3 sites"/>
</dbReference>
<dbReference type="PhosphoSitePlus" id="P11962"/>
<dbReference type="PaxDb" id="10116-ENSRNOP00000012385"/>
<dbReference type="Ensembl" id="ENSRNOT00000012385.5">
    <property type="protein sequence ID" value="ENSRNOP00000012385.3"/>
    <property type="gene ID" value="ENSRNOG00000009269.5"/>
</dbReference>
<dbReference type="GeneID" id="116700"/>
<dbReference type="KEGG" id="rno:116700"/>
<dbReference type="UCSC" id="RGD:620436">
    <property type="organism name" value="rat"/>
</dbReference>
<dbReference type="AGR" id="RGD:620436"/>
<dbReference type="CTD" id="1081"/>
<dbReference type="RGD" id="620436">
    <property type="gene designation" value="Cga"/>
</dbReference>
<dbReference type="eggNOG" id="ENOG502S1PK">
    <property type="taxonomic scope" value="Eukaryota"/>
</dbReference>
<dbReference type="GeneTree" id="ENSGT00390000012242"/>
<dbReference type="HOGENOM" id="CLU_148106_0_0_1"/>
<dbReference type="InParanoid" id="P11962"/>
<dbReference type="OMA" id="VKNHTDC"/>
<dbReference type="OrthoDB" id="9852859at2759"/>
<dbReference type="PhylomeDB" id="P11962"/>
<dbReference type="TreeFam" id="TF332733"/>
<dbReference type="Reactome" id="R-RNO-193048">
    <property type="pathway name" value="Androgen biosynthesis"/>
</dbReference>
<dbReference type="Reactome" id="R-RNO-193993">
    <property type="pathway name" value="Mineralocorticoid biosynthesis"/>
</dbReference>
<dbReference type="Reactome" id="R-RNO-209822">
    <property type="pathway name" value="Glycoprotein hormones"/>
</dbReference>
<dbReference type="Reactome" id="R-RNO-209968">
    <property type="pathway name" value="Thyroxine biosynthesis"/>
</dbReference>
<dbReference type="Reactome" id="R-RNO-375281">
    <property type="pathway name" value="Hormone ligand-binding receptors"/>
</dbReference>
<dbReference type="Reactome" id="R-RNO-8866910">
    <property type="pathway name" value="TFAP2 (AP-2) family regulates transcription of growth factors and their receptors"/>
</dbReference>
<dbReference type="PRO" id="PR:P11962"/>
<dbReference type="Proteomes" id="UP000002494">
    <property type="component" value="Chromosome 5"/>
</dbReference>
<dbReference type="Bgee" id="ENSRNOG00000009269">
    <property type="expression patterns" value="Expressed in ovary and 3 other cell types or tissues"/>
</dbReference>
<dbReference type="ExpressionAtlas" id="P11962">
    <property type="expression patterns" value="baseline and differential"/>
</dbReference>
<dbReference type="GO" id="GO:0005615">
    <property type="term" value="C:extracellular space"/>
    <property type="evidence" value="ECO:0000250"/>
    <property type="project" value="UniProtKB"/>
</dbReference>
<dbReference type="GO" id="GO:0016914">
    <property type="term" value="C:follicle-stimulating hormone complex"/>
    <property type="evidence" value="ECO:0000250"/>
    <property type="project" value="UniProtKB"/>
</dbReference>
<dbReference type="GO" id="GO:0061696">
    <property type="term" value="C:pituitary gonadotropin complex"/>
    <property type="evidence" value="ECO:0000266"/>
    <property type="project" value="RGD"/>
</dbReference>
<dbReference type="GO" id="GO:0016913">
    <property type="term" value="F:follicle-stimulating hormone activity"/>
    <property type="evidence" value="ECO:0000250"/>
    <property type="project" value="UniProtKB"/>
</dbReference>
<dbReference type="GO" id="GO:0005179">
    <property type="term" value="F:hormone activity"/>
    <property type="evidence" value="ECO:0000266"/>
    <property type="project" value="RGD"/>
</dbReference>
<dbReference type="GO" id="GO:0032870">
    <property type="term" value="P:cellular response to hormone stimulus"/>
    <property type="evidence" value="ECO:0000266"/>
    <property type="project" value="RGD"/>
</dbReference>
<dbReference type="GO" id="GO:0048589">
    <property type="term" value="P:developmental growth"/>
    <property type="evidence" value="ECO:0000266"/>
    <property type="project" value="RGD"/>
</dbReference>
<dbReference type="GO" id="GO:0046884">
    <property type="term" value="P:follicle-stimulating hormone secretion"/>
    <property type="evidence" value="ECO:0000266"/>
    <property type="project" value="RGD"/>
</dbReference>
<dbReference type="GO" id="GO:0007186">
    <property type="term" value="P:G protein-coupled receptor signaling pathway"/>
    <property type="evidence" value="ECO:0000250"/>
    <property type="project" value="UniProtKB"/>
</dbReference>
<dbReference type="GO" id="GO:0008406">
    <property type="term" value="P:gonad development"/>
    <property type="evidence" value="ECO:0000266"/>
    <property type="project" value="RGD"/>
</dbReference>
<dbReference type="GO" id="GO:0032275">
    <property type="term" value="P:luteinizing hormone secretion"/>
    <property type="evidence" value="ECO:0000266"/>
    <property type="project" value="RGD"/>
</dbReference>
<dbReference type="GO" id="GO:0046621">
    <property type="term" value="P:negative regulation of organ growth"/>
    <property type="evidence" value="ECO:0000266"/>
    <property type="project" value="RGD"/>
</dbReference>
<dbReference type="GO" id="GO:0035265">
    <property type="term" value="P:organ growth"/>
    <property type="evidence" value="ECO:0000266"/>
    <property type="project" value="RGD"/>
</dbReference>
<dbReference type="GO" id="GO:0010893">
    <property type="term" value="P:positive regulation of steroid biosynthetic process"/>
    <property type="evidence" value="ECO:0000250"/>
    <property type="project" value="UniProtKB"/>
</dbReference>
<dbReference type="GO" id="GO:0010469">
    <property type="term" value="P:regulation of signaling receptor activity"/>
    <property type="evidence" value="ECO:0000250"/>
    <property type="project" value="UniProtKB"/>
</dbReference>
<dbReference type="GO" id="GO:0030878">
    <property type="term" value="P:thyroid gland development"/>
    <property type="evidence" value="ECO:0000266"/>
    <property type="project" value="RGD"/>
</dbReference>
<dbReference type="GO" id="GO:0006590">
    <property type="term" value="P:thyroid hormone generation"/>
    <property type="evidence" value="ECO:0000266"/>
    <property type="project" value="RGD"/>
</dbReference>
<dbReference type="FunFam" id="2.10.90.10:FF:000011">
    <property type="entry name" value="Glycoprotein hormones alpha chain"/>
    <property type="match status" value="1"/>
</dbReference>
<dbReference type="Gene3D" id="2.10.90.10">
    <property type="entry name" value="Cystine-knot cytokines"/>
    <property type="match status" value="1"/>
</dbReference>
<dbReference type="InterPro" id="IPR029034">
    <property type="entry name" value="Cystine-knot_cytokine"/>
</dbReference>
<dbReference type="InterPro" id="IPR000476">
    <property type="entry name" value="Glyco_hormone"/>
</dbReference>
<dbReference type="PANTHER" id="PTHR11509">
    <property type="entry name" value="GLYCOPROTEIN HORMONE ALPHA CHAIN"/>
    <property type="match status" value="1"/>
</dbReference>
<dbReference type="PANTHER" id="PTHR11509:SF0">
    <property type="entry name" value="GLYCOPROTEIN HORMONES ALPHA CHAIN"/>
    <property type="match status" value="1"/>
</dbReference>
<dbReference type="Pfam" id="PF00236">
    <property type="entry name" value="Hormone_6"/>
    <property type="match status" value="1"/>
</dbReference>
<dbReference type="PRINTS" id="PR00274">
    <property type="entry name" value="GLYCOHORMONE"/>
</dbReference>
<dbReference type="SMART" id="SM00067">
    <property type="entry name" value="GHA"/>
    <property type="match status" value="1"/>
</dbReference>
<dbReference type="SUPFAM" id="SSF57501">
    <property type="entry name" value="Cystine-knot cytokines"/>
    <property type="match status" value="1"/>
</dbReference>
<dbReference type="PROSITE" id="PS00779">
    <property type="entry name" value="GLYCO_HORMONE_ALPHA_1"/>
    <property type="match status" value="1"/>
</dbReference>
<dbReference type="PROSITE" id="PS00780">
    <property type="entry name" value="GLYCO_HORMONE_ALPHA_2"/>
    <property type="match status" value="1"/>
</dbReference>
<dbReference type="PROSITE" id="PS50277">
    <property type="entry name" value="GLYCO_HORMONE_ALPHA_3"/>
    <property type="match status" value="1"/>
</dbReference>
<keyword id="KW-1015">Disulfide bond</keyword>
<keyword id="KW-0325">Glycoprotein</keyword>
<keyword id="KW-0372">Hormone</keyword>
<keyword id="KW-1185">Reference proteome</keyword>
<keyword id="KW-0964">Secreted</keyword>
<keyword id="KW-0732">Signal</keyword>
<reference key="1">
    <citation type="journal article" date="1982" name="J. Biol. Chem.">
        <title>Alpha subunit of rat pituitary glycoprotein hormones. Primary structure of the precursor determined from the nucleotide sequence of cloned cDNAs.</title>
        <authorList>
            <person name="Godine J.E."/>
            <person name="Chin W.W."/>
            <person name="Habener J.F."/>
        </authorList>
    </citation>
    <scope>NUCLEOTIDE SEQUENCE [MRNA]</scope>
    <source>
        <strain>Sprague-Dawley</strain>
        <tissue>Pituitary</tissue>
    </source>
</reference>
<reference key="2">
    <citation type="journal article" date="1988" name="Gene">
        <title>Isolation and characterization of the gene encoding the alpha-subunit of the rat pituitary glycoprotein hormones.</title>
        <authorList>
            <person name="Burnside J."/>
            <person name="Buckland P.R."/>
            <person name="Chin W.W."/>
        </authorList>
    </citation>
    <scope>NUCLEOTIDE SEQUENCE [GENOMIC DNA]</scope>
</reference>
<reference key="3">
    <citation type="journal article" date="1990" name="Zool. Sci.">
        <title>Strain difference in nucleotide sequences of rat glycoprotein hormone subunit cDNAs and gene fragment.</title>
        <authorList>
            <person name="Kato Y."/>
            <person name="Ezashi T."/>
            <person name="Hirai T."/>
            <person name="Kato T."/>
        </authorList>
    </citation>
    <scope>NUCLEOTIDE SEQUENCE [MRNA]</scope>
    <source>
        <strain>Wistar Imamichi</strain>
        <tissue>Pituitary anterior lobe</tissue>
    </source>
</reference>
<feature type="signal peptide">
    <location>
        <begin position="1"/>
        <end position="24"/>
    </location>
</feature>
<feature type="chain" id="PRO_0000011650" description="Glycoprotein hormones alpha chain">
    <location>
        <begin position="25"/>
        <end position="120"/>
    </location>
</feature>
<feature type="glycosylation site" description="N-linked (GlcNAc...) asparagine" evidence="1">
    <location>
        <position position="80"/>
    </location>
</feature>
<feature type="glycosylation site" description="N-linked (GlcNAc...) asparagine" evidence="1">
    <location>
        <position position="106"/>
    </location>
</feature>
<feature type="disulfide bond" evidence="1">
    <location>
        <begin position="35"/>
        <end position="59"/>
    </location>
</feature>
<feature type="disulfide bond" evidence="1">
    <location>
        <begin position="38"/>
        <end position="88"/>
    </location>
</feature>
<feature type="disulfide bond" evidence="1">
    <location>
        <begin position="56"/>
        <end position="110"/>
    </location>
</feature>
<feature type="disulfide bond" evidence="1">
    <location>
        <begin position="60"/>
        <end position="112"/>
    </location>
</feature>
<feature type="disulfide bond" evidence="1">
    <location>
        <begin position="87"/>
        <end position="115"/>
    </location>
</feature>
<feature type="sequence conflict" description="In Ref. 1; AAA97425." evidence="2" ref="1">
    <original>E</original>
    <variation>Q</variation>
    <location>
        <position position="84"/>
    </location>
</feature>
<gene>
    <name type="primary">Cga</name>
    <name type="synonym">Cga1</name>
</gene>
<organism>
    <name type="scientific">Rattus norvegicus</name>
    <name type="common">Rat</name>
    <dbReference type="NCBI Taxonomy" id="10116"/>
    <lineage>
        <taxon>Eukaryota</taxon>
        <taxon>Metazoa</taxon>
        <taxon>Chordata</taxon>
        <taxon>Craniata</taxon>
        <taxon>Vertebrata</taxon>
        <taxon>Euteleostomi</taxon>
        <taxon>Mammalia</taxon>
        <taxon>Eutheria</taxon>
        <taxon>Euarchontoglires</taxon>
        <taxon>Glires</taxon>
        <taxon>Rodentia</taxon>
        <taxon>Myomorpha</taxon>
        <taxon>Muroidea</taxon>
        <taxon>Muridae</taxon>
        <taxon>Murinae</taxon>
        <taxon>Rattus</taxon>
    </lineage>
</organism>
<comment type="function">
    <text evidence="1">Shared alpha chain of the active heterodimeric glycoprotein hormones thyrotropin/thyroid stimulating hormone/TSH, lutropin/luteinizing hormone/LH and follitropin/follicle stimulating hormone/FSH. These hormones bind specific receptors on target cells that in turn activate downstream signaling pathways.</text>
</comment>
<comment type="subunit">
    <text evidence="1">Heterodimer. The active hormones thyrotropin, lutropin and follitropin are heterodimers composed of CGA, a common alpha chain described here and a unique beta chain which confers their biological specificity to the hormones: TSHB for thyrotropin, LHB for lutropin and FSHB for follitropin.</text>
</comment>
<comment type="subcellular location">
    <subcellularLocation>
        <location evidence="1">Secreted</location>
    </subcellularLocation>
</comment>
<comment type="similarity">
    <text evidence="2">Belongs to the glycoprotein hormones subunit alpha family.</text>
</comment>